<accession>P0C5N2</accession>
<gene>
    <name type="ordered locus">YGR122C-A</name>
</gene>
<comment type="caution">
    <text evidence="1">Product of a dubious gene prediction unlikely to encode a functional protein. Because of that it is not part of the S.cerevisiae S288c complete/reference proteome set.</text>
</comment>
<organism>
    <name type="scientific">Saccharomyces cerevisiae (strain ATCC 204508 / S288c)</name>
    <name type="common">Baker's yeast</name>
    <dbReference type="NCBI Taxonomy" id="559292"/>
    <lineage>
        <taxon>Eukaryota</taxon>
        <taxon>Fungi</taxon>
        <taxon>Dikarya</taxon>
        <taxon>Ascomycota</taxon>
        <taxon>Saccharomycotina</taxon>
        <taxon>Saccharomycetes</taxon>
        <taxon>Saccharomycetales</taxon>
        <taxon>Saccharomycetaceae</taxon>
        <taxon>Saccharomyces</taxon>
    </lineage>
</organism>
<sequence length="42" mass="4636">MELVSLCNTITIISHSVLYVSLSYYIINPCTSASSNFDDSFS</sequence>
<reference key="1">
    <citation type="journal article" date="1997" name="Yeast">
        <title>An 18.3 kb DNA fragment from yeast chromosome VII carries four unknown open reading frames, the gene for an Asn synthase, remnants of Ty and three tRNA genes.</title>
        <authorList>
            <person name="van Dyck L."/>
            <person name="Tettelin H."/>
            <person name="Purnelle B."/>
            <person name="Goffeau A."/>
        </authorList>
    </citation>
    <scope>NUCLEOTIDE SEQUENCE [GENOMIC DNA]</scope>
    <source>
        <strain>ATCC 96604 / S288c / FY1679</strain>
    </source>
</reference>
<reference key="2">
    <citation type="journal article" date="1997" name="Nature">
        <title>The nucleotide sequence of Saccharomyces cerevisiae chromosome VII.</title>
        <authorList>
            <person name="Tettelin H."/>
            <person name="Agostoni-Carbone M.L."/>
            <person name="Albermann K."/>
            <person name="Albers M."/>
            <person name="Arroyo J."/>
            <person name="Backes U."/>
            <person name="Barreiros T."/>
            <person name="Bertani I."/>
            <person name="Bjourson A.J."/>
            <person name="Brueckner M."/>
            <person name="Bruschi C.V."/>
            <person name="Carignani G."/>
            <person name="Castagnoli L."/>
            <person name="Cerdan E."/>
            <person name="Clemente M.L."/>
            <person name="Coblenz A."/>
            <person name="Coglievina M."/>
            <person name="Coissac E."/>
            <person name="Defoor E."/>
            <person name="Del Bino S."/>
            <person name="Delius H."/>
            <person name="Delneri D."/>
            <person name="de Wergifosse P."/>
            <person name="Dujon B."/>
            <person name="Durand P."/>
            <person name="Entian K.-D."/>
            <person name="Eraso P."/>
            <person name="Escribano V."/>
            <person name="Fabiani L."/>
            <person name="Fartmann B."/>
            <person name="Feroli F."/>
            <person name="Feuermann M."/>
            <person name="Frontali L."/>
            <person name="Garcia-Gonzalez M."/>
            <person name="Garcia-Saez M.I."/>
            <person name="Goffeau A."/>
            <person name="Guerreiro P."/>
            <person name="Hani J."/>
            <person name="Hansen M."/>
            <person name="Hebling U."/>
            <person name="Hernandez K."/>
            <person name="Heumann K."/>
            <person name="Hilger F."/>
            <person name="Hofmann B."/>
            <person name="Indge K.J."/>
            <person name="James C.M."/>
            <person name="Klima R."/>
            <person name="Koetter P."/>
            <person name="Kramer B."/>
            <person name="Kramer W."/>
            <person name="Lauquin G."/>
            <person name="Leuther H."/>
            <person name="Louis E.J."/>
            <person name="Maillier E."/>
            <person name="Marconi A."/>
            <person name="Martegani E."/>
            <person name="Mazon M.J."/>
            <person name="Mazzoni C."/>
            <person name="McReynolds A.D.K."/>
            <person name="Melchioretto P."/>
            <person name="Mewes H.-W."/>
            <person name="Minenkova O."/>
            <person name="Mueller-Auer S."/>
            <person name="Nawrocki A."/>
            <person name="Netter P."/>
            <person name="Neu R."/>
            <person name="Nombela C."/>
            <person name="Oliver S.G."/>
            <person name="Panzeri L."/>
            <person name="Paoluzi S."/>
            <person name="Plevani P."/>
            <person name="Portetelle D."/>
            <person name="Portillo F."/>
            <person name="Potier S."/>
            <person name="Purnelle B."/>
            <person name="Rieger M."/>
            <person name="Riles L."/>
            <person name="Rinaldi T."/>
            <person name="Robben J."/>
            <person name="Rodrigues-Pousada C."/>
            <person name="Rodriguez-Belmonte E."/>
            <person name="Rodriguez-Torres A.M."/>
            <person name="Rose M."/>
            <person name="Ruzzi M."/>
            <person name="Saliola M."/>
            <person name="Sanchez-Perez M."/>
            <person name="Schaefer B."/>
            <person name="Schaefer M."/>
            <person name="Scharfe M."/>
            <person name="Schmidheini T."/>
            <person name="Schreer A."/>
            <person name="Skala J."/>
            <person name="Souciet J.-L."/>
            <person name="Steensma H.Y."/>
            <person name="Talla E."/>
            <person name="Thierry A."/>
            <person name="Vandenbol M."/>
            <person name="van der Aart Q.J.M."/>
            <person name="Van Dyck L."/>
            <person name="Vanoni M."/>
            <person name="Verhasselt P."/>
            <person name="Voet M."/>
            <person name="Volckaert G."/>
            <person name="Wambutt R."/>
            <person name="Watson M.D."/>
            <person name="Weber N."/>
            <person name="Wedler E."/>
            <person name="Wedler H."/>
            <person name="Wipfli P."/>
            <person name="Wolf K."/>
            <person name="Wright L.F."/>
            <person name="Zaccaria P."/>
            <person name="Zimmermann M."/>
            <person name="Zollner A."/>
            <person name="Kleine K."/>
        </authorList>
    </citation>
    <scope>NUCLEOTIDE SEQUENCE [LARGE SCALE GENOMIC DNA]</scope>
    <source>
        <strain>ATCC 204508 / S288c</strain>
    </source>
</reference>
<reference key="3">
    <citation type="journal article" date="2014" name="G3 (Bethesda)">
        <title>The reference genome sequence of Saccharomyces cerevisiae: Then and now.</title>
        <authorList>
            <person name="Engel S.R."/>
            <person name="Dietrich F.S."/>
            <person name="Fisk D.G."/>
            <person name="Binkley G."/>
            <person name="Balakrishnan R."/>
            <person name="Costanzo M.C."/>
            <person name="Dwight S.S."/>
            <person name="Hitz B.C."/>
            <person name="Karra K."/>
            <person name="Nash R.S."/>
            <person name="Weng S."/>
            <person name="Wong E.D."/>
            <person name="Lloyd P."/>
            <person name="Skrzypek M.S."/>
            <person name="Miyasato S.R."/>
            <person name="Simison M."/>
            <person name="Cherry J.M."/>
        </authorList>
    </citation>
    <scope>GENOME REANNOTATION</scope>
    <source>
        <strain>ATCC 204508 / S288c</strain>
    </source>
</reference>
<reference key="4">
    <citation type="journal article" date="1997" name="Cell">
        <title>Characterization of the yeast transcriptome.</title>
        <authorList>
            <person name="Velculescu V.E."/>
            <person name="Zhang L."/>
            <person name="Zhou W."/>
            <person name="Vogelstein J."/>
            <person name="Basrai M.A."/>
            <person name="Bassett D.E. Jr."/>
            <person name="Hieter P."/>
            <person name="Vogelstein B."/>
            <person name="Kinzler K.W."/>
        </authorList>
    </citation>
    <scope>GENOME REANNOTATION</scope>
</reference>
<dbReference type="EMBL" id="X83099">
    <property type="status" value="NOT_ANNOTATED_CDS"/>
    <property type="molecule type" value="Genomic_DNA"/>
</dbReference>
<dbReference type="EMBL" id="Z72907">
    <property type="status" value="NOT_ANNOTATED_CDS"/>
    <property type="molecule type" value="Genomic_DNA"/>
</dbReference>
<dbReference type="EMBL" id="Z72908">
    <property type="status" value="NOT_ANNOTATED_CDS"/>
    <property type="molecule type" value="Genomic_DNA"/>
</dbReference>
<dbReference type="STRING" id="4932.YGR122C-A"/>
<dbReference type="PaxDb" id="4932-YGR122C-A"/>
<dbReference type="EnsemblFungi" id="YGR122C-A_mRNA">
    <property type="protein sequence ID" value="YGR122C-A"/>
    <property type="gene ID" value="YGR122C-A"/>
</dbReference>
<dbReference type="AGR" id="SGD:S000007240"/>
<dbReference type="SGD" id="S000007240">
    <property type="gene designation" value="YGR122C-A"/>
</dbReference>
<dbReference type="GeneTree" id="ENSGT00940000177947"/>
<dbReference type="HOGENOM" id="CLU_211159_0_0_1"/>
<dbReference type="ChiTaRS" id="YGR122C-A">
    <property type="organism name" value="yeast"/>
</dbReference>
<name>YG122_YEAST</name>
<evidence type="ECO:0000305" key="1">
    <source>
    </source>
</evidence>
<feature type="chain" id="PRO_0000309030" description="Putative uncharacterized protein YGR122C-A">
    <location>
        <begin position="1"/>
        <end position="42"/>
    </location>
</feature>
<protein>
    <recommendedName>
        <fullName>Putative uncharacterized protein YGR122C-A</fullName>
    </recommendedName>
</protein>
<proteinExistence type="uncertain"/>